<comment type="function">
    <text>The alpha subunit is responsible for the aldol cleavage of indoleglycerol phosphate to indole and glyceraldehyde 3-phosphate.</text>
</comment>
<comment type="catalytic activity">
    <reaction evidence="1">
        <text>(1S,2R)-1-C-(indol-3-yl)glycerol 3-phosphate + L-serine = D-glyceraldehyde 3-phosphate + L-tryptophan + H2O</text>
        <dbReference type="Rhea" id="RHEA:10532"/>
        <dbReference type="ChEBI" id="CHEBI:15377"/>
        <dbReference type="ChEBI" id="CHEBI:33384"/>
        <dbReference type="ChEBI" id="CHEBI:57912"/>
        <dbReference type="ChEBI" id="CHEBI:58866"/>
        <dbReference type="ChEBI" id="CHEBI:59776"/>
        <dbReference type="EC" id="4.2.1.20"/>
    </reaction>
</comment>
<comment type="pathway">
    <text evidence="1">Amino-acid biosynthesis; L-tryptophan biosynthesis; L-tryptophan from chorismate: step 5/5.</text>
</comment>
<comment type="subunit">
    <text evidence="1">Tetramer of two alpha and two beta chains.</text>
</comment>
<comment type="similarity">
    <text evidence="1">Belongs to the TrpA family.</text>
</comment>
<proteinExistence type="inferred from homology"/>
<sequence>MSLEDAFDEPAFVPYLAAGDPDFESSLAYVEALARGGADVIELGLPFSEPIAEGPTIQQAVVRSLEGGMTPERFFEFVETLDVDVPLVCMTYYNLIYQYGPAGSQPVVPFVERAAEVGLKGFVVPDLPAEEAGPLREACDEYGLDLVFIVAPTTAGDRLERMMEQVSGYVYVQARLGVTGAREDVSDRTAETLARLEAYDVPKAVGFGISSGEQAEAVVAAGADGVIVGSALVDIVAEGHENGDAPDVVADRLESLARELKSGAVAGKQRQPGPERT</sequence>
<protein>
    <recommendedName>
        <fullName evidence="1">Tryptophan synthase alpha chain</fullName>
        <ecNumber evidence="1">4.2.1.20</ecNumber>
    </recommendedName>
</protein>
<name>TRPA_NATPD</name>
<evidence type="ECO:0000255" key="1">
    <source>
        <dbReference type="HAMAP-Rule" id="MF_00131"/>
    </source>
</evidence>
<feature type="chain" id="PRO_1000018236" description="Tryptophan synthase alpha chain">
    <location>
        <begin position="1"/>
        <end position="277"/>
    </location>
</feature>
<feature type="active site" description="Proton acceptor" evidence="1">
    <location>
        <position position="42"/>
    </location>
</feature>
<feature type="active site" description="Proton acceptor" evidence="1">
    <location>
        <position position="53"/>
    </location>
</feature>
<organism>
    <name type="scientific">Natronomonas pharaonis (strain ATCC 35678 / DSM 2160 / CIP 103997 / JCM 8858 / NBRC 14720 / NCIMB 2260 / Gabara)</name>
    <name type="common">Halobacterium pharaonis</name>
    <dbReference type="NCBI Taxonomy" id="348780"/>
    <lineage>
        <taxon>Archaea</taxon>
        <taxon>Methanobacteriati</taxon>
        <taxon>Methanobacteriota</taxon>
        <taxon>Stenosarchaea group</taxon>
        <taxon>Halobacteria</taxon>
        <taxon>Halobacteriales</taxon>
        <taxon>Haloarculaceae</taxon>
        <taxon>Natronomonas</taxon>
    </lineage>
</organism>
<accession>Q3IQC4</accession>
<dbReference type="EC" id="4.2.1.20" evidence="1"/>
<dbReference type="EMBL" id="CR936257">
    <property type="protein sequence ID" value="CAI49672.1"/>
    <property type="molecule type" value="Genomic_DNA"/>
</dbReference>
<dbReference type="RefSeq" id="WP_011323294.1">
    <property type="nucleotide sequence ID" value="NC_007426.1"/>
</dbReference>
<dbReference type="SMR" id="Q3IQC4"/>
<dbReference type="STRING" id="348780.NP_3162A"/>
<dbReference type="EnsemblBacteria" id="CAI49672">
    <property type="protein sequence ID" value="CAI49672"/>
    <property type="gene ID" value="NP_3162A"/>
</dbReference>
<dbReference type="GeneID" id="3703407"/>
<dbReference type="KEGG" id="nph:NP_3162A"/>
<dbReference type="eggNOG" id="arCOG01086">
    <property type="taxonomic scope" value="Archaea"/>
</dbReference>
<dbReference type="HOGENOM" id="CLU_016734_0_0_2"/>
<dbReference type="OrthoDB" id="25658at2157"/>
<dbReference type="UniPathway" id="UPA00035">
    <property type="reaction ID" value="UER00044"/>
</dbReference>
<dbReference type="Proteomes" id="UP000002698">
    <property type="component" value="Chromosome"/>
</dbReference>
<dbReference type="GO" id="GO:0005829">
    <property type="term" value="C:cytosol"/>
    <property type="evidence" value="ECO:0007669"/>
    <property type="project" value="TreeGrafter"/>
</dbReference>
<dbReference type="GO" id="GO:0004834">
    <property type="term" value="F:tryptophan synthase activity"/>
    <property type="evidence" value="ECO:0007669"/>
    <property type="project" value="UniProtKB-UniRule"/>
</dbReference>
<dbReference type="CDD" id="cd04724">
    <property type="entry name" value="Tryptophan_synthase_alpha"/>
    <property type="match status" value="1"/>
</dbReference>
<dbReference type="FunFam" id="3.20.20.70:FF:000037">
    <property type="entry name" value="Tryptophan synthase alpha chain"/>
    <property type="match status" value="1"/>
</dbReference>
<dbReference type="Gene3D" id="3.20.20.70">
    <property type="entry name" value="Aldolase class I"/>
    <property type="match status" value="1"/>
</dbReference>
<dbReference type="HAMAP" id="MF_00131">
    <property type="entry name" value="Trp_synth_alpha"/>
    <property type="match status" value="1"/>
</dbReference>
<dbReference type="InterPro" id="IPR013785">
    <property type="entry name" value="Aldolase_TIM"/>
</dbReference>
<dbReference type="InterPro" id="IPR011060">
    <property type="entry name" value="RibuloseP-bd_barrel"/>
</dbReference>
<dbReference type="InterPro" id="IPR018204">
    <property type="entry name" value="Trp_synthase_alpha_AS"/>
</dbReference>
<dbReference type="InterPro" id="IPR002028">
    <property type="entry name" value="Trp_synthase_suA"/>
</dbReference>
<dbReference type="NCBIfam" id="TIGR00262">
    <property type="entry name" value="trpA"/>
    <property type="match status" value="1"/>
</dbReference>
<dbReference type="PANTHER" id="PTHR43406:SF1">
    <property type="entry name" value="TRYPTOPHAN SYNTHASE ALPHA CHAIN, CHLOROPLASTIC"/>
    <property type="match status" value="1"/>
</dbReference>
<dbReference type="PANTHER" id="PTHR43406">
    <property type="entry name" value="TRYPTOPHAN SYNTHASE, ALPHA CHAIN"/>
    <property type="match status" value="1"/>
</dbReference>
<dbReference type="Pfam" id="PF00290">
    <property type="entry name" value="Trp_syntA"/>
    <property type="match status" value="1"/>
</dbReference>
<dbReference type="SUPFAM" id="SSF51366">
    <property type="entry name" value="Ribulose-phoshate binding barrel"/>
    <property type="match status" value="1"/>
</dbReference>
<dbReference type="PROSITE" id="PS00167">
    <property type="entry name" value="TRP_SYNTHASE_ALPHA"/>
    <property type="match status" value="1"/>
</dbReference>
<reference key="1">
    <citation type="journal article" date="2005" name="Genome Res.">
        <title>Living with two extremes: conclusions from the genome sequence of Natronomonas pharaonis.</title>
        <authorList>
            <person name="Falb M."/>
            <person name="Pfeiffer F."/>
            <person name="Palm P."/>
            <person name="Rodewald K."/>
            <person name="Hickmann V."/>
            <person name="Tittor J."/>
            <person name="Oesterhelt D."/>
        </authorList>
    </citation>
    <scope>NUCLEOTIDE SEQUENCE [LARGE SCALE GENOMIC DNA]</scope>
    <source>
        <strain>ATCC 35678 / DSM 2160 / CIP 103997 / JCM 8858 / NBRC 14720 / NCIMB 2260 / Gabara</strain>
    </source>
</reference>
<keyword id="KW-0028">Amino-acid biosynthesis</keyword>
<keyword id="KW-0057">Aromatic amino acid biosynthesis</keyword>
<keyword id="KW-0456">Lyase</keyword>
<keyword id="KW-1185">Reference proteome</keyword>
<keyword id="KW-0822">Tryptophan biosynthesis</keyword>
<gene>
    <name evidence="1" type="primary">trpA</name>
    <name type="ordered locus">NP_3162A</name>
</gene>